<proteinExistence type="inferred from homology"/>
<name>SECY_STRCO</name>
<organism>
    <name type="scientific">Streptomyces coelicolor (strain ATCC BAA-471 / A3(2) / M145)</name>
    <dbReference type="NCBI Taxonomy" id="100226"/>
    <lineage>
        <taxon>Bacteria</taxon>
        <taxon>Bacillati</taxon>
        <taxon>Actinomycetota</taxon>
        <taxon>Actinomycetes</taxon>
        <taxon>Kitasatosporales</taxon>
        <taxon>Streptomycetaceae</taxon>
        <taxon>Streptomyces</taxon>
        <taxon>Streptomyces albidoflavus group</taxon>
    </lineage>
</organism>
<comment type="function">
    <text evidence="1">The central subunit of the protein translocation channel SecYEG. Consists of two halves formed by TMs 1-5 and 6-10. These two domains form a lateral gate at the front which open onto the bilayer between TMs 2 and 7, and are clamped together by SecE at the back. The channel is closed by both a pore ring composed of hydrophobic SecY resides and a short helix (helix 2A) on the extracellular side of the membrane which forms a plug. The plug probably moves laterally to allow the channel to open. The ring and the pore may move independently.</text>
</comment>
<comment type="subunit">
    <text evidence="1">Component of the Sec protein translocase complex. Heterotrimer consisting of SecY, SecE and SecG subunits. The heterotrimers can form oligomers, although 1 heterotrimer is thought to be able to translocate proteins. Interacts with the ribosome. Interacts with SecDF, and other proteins may be involved. Interacts with SecA.</text>
</comment>
<comment type="subcellular location">
    <subcellularLocation>
        <location evidence="1">Cell membrane</location>
        <topology evidence="1">Multi-pass membrane protein</topology>
    </subcellularLocation>
</comment>
<comment type="similarity">
    <text evidence="1">Belongs to the SecY/SEC61-alpha family.</text>
</comment>
<dbReference type="EMBL" id="X83011">
    <property type="protein sequence ID" value="CAA58137.1"/>
    <property type="molecule type" value="Genomic_DNA"/>
</dbReference>
<dbReference type="EMBL" id="AL939121">
    <property type="protein sequence ID" value="CAB82090.1"/>
    <property type="molecule type" value="Genomic_DNA"/>
</dbReference>
<dbReference type="PIR" id="S50006">
    <property type="entry name" value="S50006"/>
</dbReference>
<dbReference type="RefSeq" id="NP_628881.1">
    <property type="nucleotide sequence ID" value="NC_003888.3"/>
</dbReference>
<dbReference type="RefSeq" id="WP_003974248.1">
    <property type="nucleotide sequence ID" value="NZ_VNID01000016.1"/>
</dbReference>
<dbReference type="SMR" id="P46785"/>
<dbReference type="FunCoup" id="P46785">
    <property type="interactions" value="426"/>
</dbReference>
<dbReference type="STRING" id="100226.gene:17762371"/>
<dbReference type="PaxDb" id="100226-SCO4722"/>
<dbReference type="GeneID" id="96655936"/>
<dbReference type="KEGG" id="sco:SCO4722"/>
<dbReference type="PATRIC" id="fig|100226.15.peg.4793"/>
<dbReference type="eggNOG" id="COG0201">
    <property type="taxonomic scope" value="Bacteria"/>
</dbReference>
<dbReference type="HOGENOM" id="CLU_030313_0_0_11"/>
<dbReference type="InParanoid" id="P46785"/>
<dbReference type="OrthoDB" id="9809248at2"/>
<dbReference type="PhylomeDB" id="P46785"/>
<dbReference type="Proteomes" id="UP000001973">
    <property type="component" value="Chromosome"/>
</dbReference>
<dbReference type="GO" id="GO:0031522">
    <property type="term" value="C:cell envelope Sec protein transport complex"/>
    <property type="evidence" value="ECO:0000318"/>
    <property type="project" value="GO_Central"/>
</dbReference>
<dbReference type="GO" id="GO:0005886">
    <property type="term" value="C:plasma membrane"/>
    <property type="evidence" value="ECO:0000318"/>
    <property type="project" value="GO_Central"/>
</dbReference>
<dbReference type="GO" id="GO:0008320">
    <property type="term" value="F:protein transmembrane transporter activity"/>
    <property type="evidence" value="ECO:0000318"/>
    <property type="project" value="GO_Central"/>
</dbReference>
<dbReference type="GO" id="GO:0005048">
    <property type="term" value="F:signal sequence binding"/>
    <property type="evidence" value="ECO:0000318"/>
    <property type="project" value="GO_Central"/>
</dbReference>
<dbReference type="GO" id="GO:0043952">
    <property type="term" value="P:protein transport by the Sec complex"/>
    <property type="evidence" value="ECO:0007669"/>
    <property type="project" value="UniProtKB-UniRule"/>
</dbReference>
<dbReference type="GO" id="GO:0006616">
    <property type="term" value="P:SRP-dependent cotranslational protein targeting to membrane, translocation"/>
    <property type="evidence" value="ECO:0000318"/>
    <property type="project" value="GO_Central"/>
</dbReference>
<dbReference type="FunFam" id="1.10.3370.10:FF:000001">
    <property type="entry name" value="Preprotein translocase subunit SecY"/>
    <property type="match status" value="1"/>
</dbReference>
<dbReference type="Gene3D" id="1.10.3370.10">
    <property type="entry name" value="SecY subunit domain"/>
    <property type="match status" value="1"/>
</dbReference>
<dbReference type="HAMAP" id="MF_01465">
    <property type="entry name" value="SecY"/>
    <property type="match status" value="1"/>
</dbReference>
<dbReference type="InterPro" id="IPR026593">
    <property type="entry name" value="SecY"/>
</dbReference>
<dbReference type="InterPro" id="IPR002208">
    <property type="entry name" value="SecY/SEC61-alpha"/>
</dbReference>
<dbReference type="InterPro" id="IPR030659">
    <property type="entry name" value="SecY_CS"/>
</dbReference>
<dbReference type="InterPro" id="IPR023201">
    <property type="entry name" value="SecY_dom_sf"/>
</dbReference>
<dbReference type="NCBIfam" id="TIGR00967">
    <property type="entry name" value="3a0501s007"/>
    <property type="match status" value="1"/>
</dbReference>
<dbReference type="PANTHER" id="PTHR10906">
    <property type="entry name" value="SECY/SEC61-ALPHA FAMILY MEMBER"/>
    <property type="match status" value="1"/>
</dbReference>
<dbReference type="Pfam" id="PF00344">
    <property type="entry name" value="SecY"/>
    <property type="match status" value="1"/>
</dbReference>
<dbReference type="PIRSF" id="PIRSF004557">
    <property type="entry name" value="SecY"/>
    <property type="match status" value="1"/>
</dbReference>
<dbReference type="PRINTS" id="PR00303">
    <property type="entry name" value="SECYTRNLCASE"/>
</dbReference>
<dbReference type="SUPFAM" id="SSF103491">
    <property type="entry name" value="Preprotein translocase SecY subunit"/>
    <property type="match status" value="1"/>
</dbReference>
<dbReference type="PROSITE" id="PS00755">
    <property type="entry name" value="SECY_1"/>
    <property type="match status" value="1"/>
</dbReference>
<dbReference type="PROSITE" id="PS00756">
    <property type="entry name" value="SECY_2"/>
    <property type="match status" value="1"/>
</dbReference>
<feature type="chain" id="PRO_0000131750" description="Protein translocase subunit SecY">
    <location>
        <begin position="1"/>
        <end position="437"/>
    </location>
</feature>
<feature type="transmembrane region" description="Helical" evidence="1">
    <location>
        <begin position="19"/>
        <end position="39"/>
    </location>
</feature>
<feature type="transmembrane region" description="Helical" evidence="1">
    <location>
        <begin position="69"/>
        <end position="89"/>
    </location>
</feature>
<feature type="transmembrane region" description="Helical" evidence="1">
    <location>
        <begin position="122"/>
        <end position="142"/>
    </location>
</feature>
<feature type="transmembrane region" description="Helical" evidence="1">
    <location>
        <begin position="157"/>
        <end position="177"/>
    </location>
</feature>
<feature type="transmembrane region" description="Helical" evidence="1">
    <location>
        <begin position="189"/>
        <end position="209"/>
    </location>
</feature>
<feature type="transmembrane region" description="Helical" evidence="1">
    <location>
        <begin position="219"/>
        <end position="239"/>
    </location>
</feature>
<feature type="transmembrane region" description="Helical" evidence="1">
    <location>
        <begin position="275"/>
        <end position="295"/>
    </location>
</feature>
<feature type="transmembrane region" description="Helical" evidence="1">
    <location>
        <begin position="318"/>
        <end position="338"/>
    </location>
</feature>
<feature type="transmembrane region" description="Helical" evidence="1">
    <location>
        <begin position="378"/>
        <end position="398"/>
    </location>
</feature>
<feature type="transmembrane region" description="Helical" evidence="1">
    <location>
        <begin position="400"/>
        <end position="420"/>
    </location>
</feature>
<gene>
    <name evidence="1" type="primary">secY</name>
    <name type="ordered locus">SCO4722</name>
    <name type="ORF">SCD31.47</name>
</gene>
<protein>
    <recommendedName>
        <fullName evidence="1">Protein translocase subunit SecY</fullName>
    </recommendedName>
</protein>
<reference key="1">
    <citation type="submission" date="1998-02" db="EMBL/GenBank/DDBJ databases">
        <authorList>
            <person name="Loriaux A."/>
            <person name="Brans A."/>
            <person name="Dusart J."/>
        </authorList>
    </citation>
    <scope>NUCLEOTIDE SEQUENCE [GENOMIC DNA]</scope>
    <source>
        <strain>A3(2) / NRRL B-16638</strain>
    </source>
</reference>
<reference key="2">
    <citation type="journal article" date="2002" name="Nature">
        <title>Complete genome sequence of the model actinomycete Streptomyces coelicolor A3(2).</title>
        <authorList>
            <person name="Bentley S.D."/>
            <person name="Chater K.F."/>
            <person name="Cerdeno-Tarraga A.-M."/>
            <person name="Challis G.L."/>
            <person name="Thomson N.R."/>
            <person name="James K.D."/>
            <person name="Harris D.E."/>
            <person name="Quail M.A."/>
            <person name="Kieser H."/>
            <person name="Harper D."/>
            <person name="Bateman A."/>
            <person name="Brown S."/>
            <person name="Chandra G."/>
            <person name="Chen C.W."/>
            <person name="Collins M."/>
            <person name="Cronin A."/>
            <person name="Fraser A."/>
            <person name="Goble A."/>
            <person name="Hidalgo J."/>
            <person name="Hornsby T."/>
            <person name="Howarth S."/>
            <person name="Huang C.-H."/>
            <person name="Kieser T."/>
            <person name="Larke L."/>
            <person name="Murphy L.D."/>
            <person name="Oliver K."/>
            <person name="O'Neil S."/>
            <person name="Rabbinowitsch E."/>
            <person name="Rajandream M.A."/>
            <person name="Rutherford K.M."/>
            <person name="Rutter S."/>
            <person name="Seeger K."/>
            <person name="Saunders D."/>
            <person name="Sharp S."/>
            <person name="Squares R."/>
            <person name="Squares S."/>
            <person name="Taylor K."/>
            <person name="Warren T."/>
            <person name="Wietzorrek A."/>
            <person name="Woodward J.R."/>
            <person name="Barrell B.G."/>
            <person name="Parkhill J."/>
            <person name="Hopwood D.A."/>
        </authorList>
    </citation>
    <scope>NUCLEOTIDE SEQUENCE [LARGE SCALE GENOMIC DNA]</scope>
    <source>
        <strain>ATCC BAA-471 / A3(2) / M145</strain>
    </source>
</reference>
<evidence type="ECO:0000255" key="1">
    <source>
        <dbReference type="HAMAP-Rule" id="MF_01465"/>
    </source>
</evidence>
<sequence length="437" mass="47371">MLTAFARAFKTPDLRKKLLFTLGIIVVYRLGTHIPIPGVDYKNVQECVDQASGNQGLFGLVNMFSGGALLQITVFALGIMPYITASIILQLLTVVIPRLEALKKEGQAGTAKITQYTRYLTVALAILQGTGLVATARSGALFSGCTVAGQIVPDQAIFTTVVMVICMTAGTCVVMWLGELITDRGIGNGMSILMFISIAATFPSALWAIKKQGELADGWIEFGTVILVGLVMVGLVVFVEQAQRRIPVQYAKRMIGRRSYGGTSTYIPLKVNQAGVIPVIFASSLLYIPALIVQFSNSTAGWATWITKNLADTAATPHIILYFFLIVFFAFFYVAISFNPEEVADNMKKYGGFIPGIRAGRPTAEYLSYVLNRITWPGSLYLGLIALVPTMALAGFGANQNFPFGGTSILIIVGVGLETVKQIESQLQQRNYEGFLR</sequence>
<accession>P46785</accession>
<keyword id="KW-1003">Cell membrane</keyword>
<keyword id="KW-0472">Membrane</keyword>
<keyword id="KW-0653">Protein transport</keyword>
<keyword id="KW-1185">Reference proteome</keyword>
<keyword id="KW-0811">Translocation</keyword>
<keyword id="KW-0812">Transmembrane</keyword>
<keyword id="KW-1133">Transmembrane helix</keyword>
<keyword id="KW-0813">Transport</keyword>